<organism>
    <name type="scientific">Arabidopsis thaliana</name>
    <name type="common">Mouse-ear cress</name>
    <dbReference type="NCBI Taxonomy" id="3702"/>
    <lineage>
        <taxon>Eukaryota</taxon>
        <taxon>Viridiplantae</taxon>
        <taxon>Streptophyta</taxon>
        <taxon>Embryophyta</taxon>
        <taxon>Tracheophyta</taxon>
        <taxon>Spermatophyta</taxon>
        <taxon>Magnoliopsida</taxon>
        <taxon>eudicotyledons</taxon>
        <taxon>Gunneridae</taxon>
        <taxon>Pentapetalae</taxon>
        <taxon>rosids</taxon>
        <taxon>malvids</taxon>
        <taxon>Brassicales</taxon>
        <taxon>Brassicaceae</taxon>
        <taxon>Camelineae</taxon>
        <taxon>Arabidopsis</taxon>
    </lineage>
</organism>
<feature type="chain" id="PRO_0000416736" description="Putative UDP-glucuronate:xylan alpha-glucuronosyltransferase 4">
    <location>
        <begin position="1"/>
        <end position="557"/>
    </location>
</feature>
<feature type="transmembrane region" description="Helical; Signal-anchor for type II membrane protein" evidence="4">
    <location>
        <begin position="11"/>
        <end position="31"/>
    </location>
</feature>
<feature type="binding site" evidence="3">
    <location>
        <begin position="365"/>
        <end position="367"/>
    </location>
    <ligand>
        <name>substrate</name>
    </ligand>
</feature>
<feature type="binding site" evidence="3">
    <location>
        <position position="365"/>
    </location>
    <ligand>
        <name>Mn(2+)</name>
        <dbReference type="ChEBI" id="CHEBI:29035"/>
    </ligand>
</feature>
<feature type="binding site" evidence="3">
    <location>
        <position position="367"/>
    </location>
    <ligand>
        <name>Mn(2+)</name>
        <dbReference type="ChEBI" id="CHEBI:29035"/>
    </ligand>
</feature>
<feature type="binding site" evidence="3">
    <location>
        <begin position="394"/>
        <end position="396"/>
    </location>
    <ligand>
        <name>substrate</name>
    </ligand>
</feature>
<feature type="binding site" evidence="3">
    <location>
        <begin position="421"/>
        <end position="425"/>
    </location>
    <ligand>
        <name>substrate</name>
    </ligand>
</feature>
<feature type="binding site" evidence="3">
    <location>
        <begin position="466"/>
        <end position="471"/>
    </location>
    <ligand>
        <name>substrate</name>
    </ligand>
</feature>
<feature type="binding site" evidence="3">
    <location>
        <position position="466"/>
    </location>
    <ligand>
        <name>Mn(2+)</name>
        <dbReference type="ChEBI" id="CHEBI:29035"/>
    </ligand>
</feature>
<feature type="site" description="Important for catalytic activity" evidence="2">
    <location>
        <position position="349"/>
    </location>
</feature>
<accession>Q9FZ37</accession>
<dbReference type="EC" id="2.4.1.-"/>
<dbReference type="EMBL" id="AC064840">
    <property type="protein sequence ID" value="AAG00875.1"/>
    <property type="molecule type" value="Genomic_DNA"/>
</dbReference>
<dbReference type="EMBL" id="AC069144">
    <property type="protein sequence ID" value="AAG51129.1"/>
    <property type="molecule type" value="Genomic_DNA"/>
</dbReference>
<dbReference type="EMBL" id="CP002684">
    <property type="protein sequence ID" value="AEE33165.1"/>
    <property type="molecule type" value="Genomic_DNA"/>
</dbReference>
<dbReference type="PIR" id="H96590">
    <property type="entry name" value="H96590"/>
</dbReference>
<dbReference type="RefSeq" id="NP_175891.1">
    <property type="nucleotide sequence ID" value="NM_104367.2"/>
</dbReference>
<dbReference type="SMR" id="Q9FZ37"/>
<dbReference type="FunCoup" id="Q9FZ37">
    <property type="interactions" value="25"/>
</dbReference>
<dbReference type="STRING" id="3702.Q9FZ37"/>
<dbReference type="CAZy" id="GT8">
    <property type="family name" value="Glycosyltransferase Family 8"/>
</dbReference>
<dbReference type="PaxDb" id="3702-AT1G54940.1"/>
<dbReference type="ProteomicsDB" id="247321"/>
<dbReference type="EnsemblPlants" id="AT1G54940.1">
    <property type="protein sequence ID" value="AT1G54940.1"/>
    <property type="gene ID" value="AT1G54940"/>
</dbReference>
<dbReference type="GeneID" id="841934"/>
<dbReference type="Gramene" id="AT1G54940.1">
    <property type="protein sequence ID" value="AT1G54940.1"/>
    <property type="gene ID" value="AT1G54940"/>
</dbReference>
<dbReference type="KEGG" id="ath:AT1G54940"/>
<dbReference type="Araport" id="AT1G54940"/>
<dbReference type="TAIR" id="AT1G54940">
    <property type="gene designation" value="PGSIP4"/>
</dbReference>
<dbReference type="eggNOG" id="KOG1950">
    <property type="taxonomic scope" value="Eukaryota"/>
</dbReference>
<dbReference type="HOGENOM" id="CLU_023070_1_0_1"/>
<dbReference type="InParanoid" id="Q9FZ37"/>
<dbReference type="OMA" id="VPCDGWS"/>
<dbReference type="OrthoDB" id="2014201at2759"/>
<dbReference type="PhylomeDB" id="Q9FZ37"/>
<dbReference type="PRO" id="PR:Q9FZ37"/>
<dbReference type="Proteomes" id="UP000006548">
    <property type="component" value="Chromosome 1"/>
</dbReference>
<dbReference type="ExpressionAtlas" id="Q9FZ37">
    <property type="expression patterns" value="baseline and differential"/>
</dbReference>
<dbReference type="GO" id="GO:0005794">
    <property type="term" value="C:Golgi apparatus"/>
    <property type="evidence" value="ECO:0000314"/>
    <property type="project" value="TAIR"/>
</dbReference>
<dbReference type="GO" id="GO:0000139">
    <property type="term" value="C:Golgi membrane"/>
    <property type="evidence" value="ECO:0007669"/>
    <property type="project" value="UniProtKB-SubCell"/>
</dbReference>
<dbReference type="GO" id="GO:0015020">
    <property type="term" value="F:glucuronosyltransferase activity"/>
    <property type="evidence" value="ECO:0000314"/>
    <property type="project" value="TAIR"/>
</dbReference>
<dbReference type="GO" id="GO:0046872">
    <property type="term" value="F:metal ion binding"/>
    <property type="evidence" value="ECO:0007669"/>
    <property type="project" value="UniProtKB-KW"/>
</dbReference>
<dbReference type="GO" id="GO:0071555">
    <property type="term" value="P:cell wall organization"/>
    <property type="evidence" value="ECO:0007669"/>
    <property type="project" value="UniProtKB-KW"/>
</dbReference>
<dbReference type="CDD" id="cd02537">
    <property type="entry name" value="GT8_Glycogenin"/>
    <property type="match status" value="1"/>
</dbReference>
<dbReference type="FunFam" id="3.90.550.10:FF:000018">
    <property type="entry name" value="Hexosyltransferase"/>
    <property type="match status" value="1"/>
</dbReference>
<dbReference type="Gene3D" id="3.90.550.10">
    <property type="entry name" value="Spore Coat Polysaccharide Biosynthesis Protein SpsA, Chain A"/>
    <property type="match status" value="1"/>
</dbReference>
<dbReference type="InterPro" id="IPR002495">
    <property type="entry name" value="Glyco_trans_8"/>
</dbReference>
<dbReference type="InterPro" id="IPR050587">
    <property type="entry name" value="GNT1/Glycosyltrans_8"/>
</dbReference>
<dbReference type="InterPro" id="IPR029044">
    <property type="entry name" value="Nucleotide-diphossugar_trans"/>
</dbReference>
<dbReference type="PANTHER" id="PTHR11183">
    <property type="entry name" value="GLYCOGENIN SUBFAMILY MEMBER"/>
    <property type="match status" value="1"/>
</dbReference>
<dbReference type="Pfam" id="PF01501">
    <property type="entry name" value="Glyco_transf_8"/>
    <property type="match status" value="2"/>
</dbReference>
<dbReference type="SUPFAM" id="SSF53448">
    <property type="entry name" value="Nucleotide-diphospho-sugar transferases"/>
    <property type="match status" value="1"/>
</dbReference>
<proteinExistence type="inferred from homology"/>
<name>GUX4_ARATH</name>
<gene>
    <name type="primary">GUX4</name>
    <name type="synonym">PGSIP4</name>
    <name type="ordered locus">At1g54940</name>
    <name type="ORF">F14C21.47</name>
    <name type="ORF">T24C10.6</name>
</gene>
<evidence type="ECO:0000250" key="1"/>
<evidence type="ECO:0000250" key="2">
    <source>
        <dbReference type="UniProtKB" id="P13280"/>
    </source>
</evidence>
<evidence type="ECO:0000250" key="3">
    <source>
        <dbReference type="UniProtKB" id="P46976"/>
    </source>
</evidence>
<evidence type="ECO:0000255" key="4"/>
<evidence type="ECO:0000305" key="5"/>
<sequence length="557" mass="64709">MGTKTHNSRGKIFMIYLILVSLSLLGLILPFKPLFRITSPSSTLRIDLPSPQVNKNPKWLRLIRNYLPEKRIQVGFLNIDEKERESYEARGPLVLKNIHVPLDHIPKNVTWKSLYPEWINEEASTCPEIPLPQPEGSDANVDVIVARVPCDGWSANKGLRDVFRLQVNLAAANLAVQSGLRTVNQAVYVVFIGSCGPMHEIFPCDERVMRVEDYWVYKPYLPRLKQKLLMPVGSCQIAPSFAQFGQEAWRPKHEDNLASKAVTALPRRLRVAYVTVLHSSEAYVCGAIALAQSIRQSGSHKDMILLHDHTITNKSLIGLSAAGWNLRLIDRIRSPFSQKDSYNEWNYSKLRVWQVTDYDKLVFIDADFIILKKLDHLFYYPQLSASGNDKVLFNSGIMVLEPSACMFKDLMEKSFKIESYNGGDQGFLNEIFVWWHRLSKRVNTMKYFDEKNHRRHDLPENVEGLHYLGLKPWVCYRDYDCNWDISERRVFASDSVHEKWWKVYDKMSEQLKGYCGLNKNMEKRIEKWRRIAKNNSLPDRHWEIEVRDPRKTNLLVQ</sequence>
<reference key="1">
    <citation type="journal article" date="2000" name="Nature">
        <title>Sequence and analysis of chromosome 1 of the plant Arabidopsis thaliana.</title>
        <authorList>
            <person name="Theologis A."/>
            <person name="Ecker J.R."/>
            <person name="Palm C.J."/>
            <person name="Federspiel N.A."/>
            <person name="Kaul S."/>
            <person name="White O."/>
            <person name="Alonso J."/>
            <person name="Altafi H."/>
            <person name="Araujo R."/>
            <person name="Bowman C.L."/>
            <person name="Brooks S.Y."/>
            <person name="Buehler E."/>
            <person name="Chan A."/>
            <person name="Chao Q."/>
            <person name="Chen H."/>
            <person name="Cheuk R.F."/>
            <person name="Chin C.W."/>
            <person name="Chung M.K."/>
            <person name="Conn L."/>
            <person name="Conway A.B."/>
            <person name="Conway A.R."/>
            <person name="Creasy T.H."/>
            <person name="Dewar K."/>
            <person name="Dunn P."/>
            <person name="Etgu P."/>
            <person name="Feldblyum T.V."/>
            <person name="Feng J.-D."/>
            <person name="Fong B."/>
            <person name="Fujii C.Y."/>
            <person name="Gill J.E."/>
            <person name="Goldsmith A.D."/>
            <person name="Haas B."/>
            <person name="Hansen N.F."/>
            <person name="Hughes B."/>
            <person name="Huizar L."/>
            <person name="Hunter J.L."/>
            <person name="Jenkins J."/>
            <person name="Johnson-Hopson C."/>
            <person name="Khan S."/>
            <person name="Khaykin E."/>
            <person name="Kim C.J."/>
            <person name="Koo H.L."/>
            <person name="Kremenetskaia I."/>
            <person name="Kurtz D.B."/>
            <person name="Kwan A."/>
            <person name="Lam B."/>
            <person name="Langin-Hooper S."/>
            <person name="Lee A."/>
            <person name="Lee J.M."/>
            <person name="Lenz C.A."/>
            <person name="Li J.H."/>
            <person name="Li Y.-P."/>
            <person name="Lin X."/>
            <person name="Liu S.X."/>
            <person name="Liu Z.A."/>
            <person name="Luros J.S."/>
            <person name="Maiti R."/>
            <person name="Marziali A."/>
            <person name="Militscher J."/>
            <person name="Miranda M."/>
            <person name="Nguyen M."/>
            <person name="Nierman W.C."/>
            <person name="Osborne B.I."/>
            <person name="Pai G."/>
            <person name="Peterson J."/>
            <person name="Pham P.K."/>
            <person name="Rizzo M."/>
            <person name="Rooney T."/>
            <person name="Rowley D."/>
            <person name="Sakano H."/>
            <person name="Salzberg S.L."/>
            <person name="Schwartz J.R."/>
            <person name="Shinn P."/>
            <person name="Southwick A.M."/>
            <person name="Sun H."/>
            <person name="Tallon L.J."/>
            <person name="Tambunga G."/>
            <person name="Toriumi M.J."/>
            <person name="Town C.D."/>
            <person name="Utterback T."/>
            <person name="Van Aken S."/>
            <person name="Vaysberg M."/>
            <person name="Vysotskaia V.S."/>
            <person name="Walker M."/>
            <person name="Wu D."/>
            <person name="Yu G."/>
            <person name="Fraser C.M."/>
            <person name="Venter J.C."/>
            <person name="Davis R.W."/>
        </authorList>
    </citation>
    <scope>NUCLEOTIDE SEQUENCE [LARGE SCALE GENOMIC DNA]</scope>
    <source>
        <strain>cv. Columbia</strain>
    </source>
</reference>
<reference key="2">
    <citation type="journal article" date="2017" name="Plant J.">
        <title>Araport11: a complete reannotation of the Arabidopsis thaliana reference genome.</title>
        <authorList>
            <person name="Cheng C.Y."/>
            <person name="Krishnakumar V."/>
            <person name="Chan A.P."/>
            <person name="Thibaud-Nissen F."/>
            <person name="Schobel S."/>
            <person name="Town C.D."/>
        </authorList>
    </citation>
    <scope>GENOME REANNOTATION</scope>
    <source>
        <strain>cv. Columbia</strain>
    </source>
</reference>
<reference key="3">
    <citation type="journal article" date="2005" name="Plant Sci.">
        <title>Reduced expression of a protein homologous to glycogenin leads to reduction of starch content in Arabidopsis leaves.</title>
        <authorList>
            <person name="Chatterjee M."/>
            <person name="Berbezy P."/>
            <person name="Vyas D."/>
            <person name="Coates S."/>
            <person name="Barsby T."/>
        </authorList>
        <dbReference type="AGRICOLA" id="IND43669941"/>
    </citation>
    <scope>GENE FAMILY</scope>
</reference>
<keyword id="KW-0961">Cell wall biogenesis/degradation</keyword>
<keyword id="KW-0328">Glycosyltransferase</keyword>
<keyword id="KW-0333">Golgi apparatus</keyword>
<keyword id="KW-0464">Manganese</keyword>
<keyword id="KW-0472">Membrane</keyword>
<keyword id="KW-0479">Metal-binding</keyword>
<keyword id="KW-1185">Reference proteome</keyword>
<keyword id="KW-0735">Signal-anchor</keyword>
<keyword id="KW-0808">Transferase</keyword>
<keyword id="KW-0812">Transmembrane</keyword>
<keyword id="KW-1133">Transmembrane helix</keyword>
<protein>
    <recommendedName>
        <fullName>Putative UDP-glucuronate:xylan alpha-glucuronosyltransferase 4</fullName>
        <shortName>UDP-GlcA:xylan glucuronyltransferase 4</shortName>
        <ecNumber>2.4.1.-</ecNumber>
    </recommendedName>
    <alternativeName>
        <fullName>Glycogenin-like protein 4</fullName>
    </alternativeName>
    <alternativeName>
        <fullName>Plant glycogenin-like starch initiation protein 4</fullName>
    </alternativeName>
    <alternativeName>
        <fullName>Protein GLUCURONIC ACID SUBSTITUTION OF XYLAN 4</fullName>
        <shortName>AtGUX4</shortName>
    </alternativeName>
</protein>
<comment type="function">
    <text evidence="1">May be involved in the substitutions of the xylan backbone in stem glucuronoxylan.</text>
</comment>
<comment type="cofactor">
    <cofactor evidence="3">
        <name>Mn(2+)</name>
        <dbReference type="ChEBI" id="CHEBI:29035"/>
    </cofactor>
</comment>
<comment type="subcellular location">
    <subcellularLocation>
        <location evidence="5">Golgi apparatus membrane</location>
        <topology evidence="5">Single-pass type II membrane protein</topology>
    </subcellularLocation>
</comment>
<comment type="similarity">
    <text evidence="5">Belongs to the glycosyltransferase 8 family. Glycogenin subfamily.</text>
</comment>